<sequence length="968" mass="109768">MPFTLGQRWISDTESELGLGTVVAVDARTVTLLFPSTGENRLYARSDSPVTRVMFNPGDTITSHDGWQMQVEEVKEENGLLTYIGTRLDTEESGVALREVFLDSKLVFSKPQDRLFAGQIDRMDRFALRYRARKYSSEQFRMPYSGLRGQRTSLIPHQLNIAHDVGRRHAPRVLLADEVGLGKTIEAGMILHQQLLSGAAERVLIIVPETLQHQWLVEMLRRFNLRFALFDDERYAEAQHDAYNPFDTEQLVICSLDFARRSKQRLEHLCEAEWDLLVVDEAHHLVWSEDAPSREYQAIEQLAEHVPGVLLLTATPEQLGMESHFARLRLLDPNRFHDFAQFVEEQKNYRPVADAVAMLLAGNKLSNDELNMLGEMIGEQDIEPLLQAANSNSEDAQSARQELVSMLMDRHGTSRVLFRNTRNGVKGFPKRELHTIKLPLPTQYQTAIKVSGIMGARKSAEDRARDMLYPERIYQEFEGDNATWWNFDPRVEWLMGYLTSHRSQKVLVICAKAATALQLEQVLREREGIRAAVFHEGMSIIERDRAAAWFAEEDTGAQVLLCSEIGSEGRNFQFASHMVMFDLPFNPDLLEQRIGRLDRIGQAHDIQIHVPYLEKTAQSVLVRWYHEGLDAFEHTCPTGRTIYDSVYNDLINYLASPDQTEGFDDLIKNCREQHEALKAQLEQGRDRLLEIHSNGGEKAQALAESIEEQDDDTNLIAFAMNLFDIIGINQDDRGDNMIVLTPSDHMLVPDFPGLSEDGITITFDREVALAREDAQFITWEHPLIRNGLDLILSGDTGSSTISLLKNKALPVGTLLVELIYVVEAQAPKQLQLNRFLPPTPVRMLLDKNGNNLAAQVEFETFNRQLNAVNRHTGSKLVNAVQQDVHAILQLGEAQIEKSARALIDAARNEADEKLSAELSRLEALRAVNPNIRDDELTAIESNRQQVMESLDQAGWRLDALRLIVVTHQ</sequence>
<accession>B7LVT0</accession>
<organism>
    <name type="scientific">Escherichia fergusonii (strain ATCC 35469 / DSM 13698 / CCUG 18766 / IAM 14443 / JCM 21226 / LMG 7866 / NBRC 102419 / NCTC 12128 / CDC 0568-73)</name>
    <dbReference type="NCBI Taxonomy" id="585054"/>
    <lineage>
        <taxon>Bacteria</taxon>
        <taxon>Pseudomonadati</taxon>
        <taxon>Pseudomonadota</taxon>
        <taxon>Gammaproteobacteria</taxon>
        <taxon>Enterobacterales</taxon>
        <taxon>Enterobacteriaceae</taxon>
        <taxon>Escherichia</taxon>
    </lineage>
</organism>
<feature type="chain" id="PRO_1000188178" description="RNA polymerase-associated protein RapA">
    <location>
        <begin position="1"/>
        <end position="968"/>
    </location>
</feature>
<feature type="domain" description="Helicase ATP-binding" evidence="1">
    <location>
        <begin position="164"/>
        <end position="334"/>
    </location>
</feature>
<feature type="domain" description="Helicase C-terminal" evidence="1">
    <location>
        <begin position="490"/>
        <end position="662"/>
    </location>
</feature>
<feature type="short sequence motif" description="DEAH box">
    <location>
        <begin position="280"/>
        <end position="283"/>
    </location>
</feature>
<feature type="binding site" evidence="1">
    <location>
        <begin position="177"/>
        <end position="184"/>
    </location>
    <ligand>
        <name>ATP</name>
        <dbReference type="ChEBI" id="CHEBI:30616"/>
    </ligand>
</feature>
<name>RAPA_ESCF3</name>
<protein>
    <recommendedName>
        <fullName evidence="1">RNA polymerase-associated protein RapA</fullName>
        <ecNumber evidence="1">3.6.4.-</ecNumber>
    </recommendedName>
    <alternativeName>
        <fullName evidence="1">ATP-dependent helicase HepA</fullName>
    </alternativeName>
</protein>
<keyword id="KW-0010">Activator</keyword>
<keyword id="KW-0067">ATP-binding</keyword>
<keyword id="KW-0238">DNA-binding</keyword>
<keyword id="KW-0347">Helicase</keyword>
<keyword id="KW-0378">Hydrolase</keyword>
<keyword id="KW-0547">Nucleotide-binding</keyword>
<keyword id="KW-0804">Transcription</keyword>
<keyword id="KW-0805">Transcription regulation</keyword>
<comment type="function">
    <text evidence="1">Transcription regulator that activates transcription by stimulating RNA polymerase (RNAP) recycling in case of stress conditions such as supercoiled DNA or high salt concentrations. Probably acts by releasing the RNAP, when it is trapped or immobilized on tightly supercoiled DNA. Does not activate transcription on linear DNA. Probably not involved in DNA repair.</text>
</comment>
<comment type="subunit">
    <text evidence="1">Interacts with the RNAP. Has a higher affinity for the core RNAP than for the holoenzyme. Its ATPase activity is stimulated by binding to RNAP.</text>
</comment>
<comment type="similarity">
    <text evidence="1">Belongs to the SNF2/RAD54 helicase family. RapA subfamily.</text>
</comment>
<reference key="1">
    <citation type="journal article" date="2009" name="PLoS Genet.">
        <title>Organised genome dynamics in the Escherichia coli species results in highly diverse adaptive paths.</title>
        <authorList>
            <person name="Touchon M."/>
            <person name="Hoede C."/>
            <person name="Tenaillon O."/>
            <person name="Barbe V."/>
            <person name="Baeriswyl S."/>
            <person name="Bidet P."/>
            <person name="Bingen E."/>
            <person name="Bonacorsi S."/>
            <person name="Bouchier C."/>
            <person name="Bouvet O."/>
            <person name="Calteau A."/>
            <person name="Chiapello H."/>
            <person name="Clermont O."/>
            <person name="Cruveiller S."/>
            <person name="Danchin A."/>
            <person name="Diard M."/>
            <person name="Dossat C."/>
            <person name="Karoui M.E."/>
            <person name="Frapy E."/>
            <person name="Garry L."/>
            <person name="Ghigo J.M."/>
            <person name="Gilles A.M."/>
            <person name="Johnson J."/>
            <person name="Le Bouguenec C."/>
            <person name="Lescat M."/>
            <person name="Mangenot S."/>
            <person name="Martinez-Jehanne V."/>
            <person name="Matic I."/>
            <person name="Nassif X."/>
            <person name="Oztas S."/>
            <person name="Petit M.A."/>
            <person name="Pichon C."/>
            <person name="Rouy Z."/>
            <person name="Ruf C.S."/>
            <person name="Schneider D."/>
            <person name="Tourret J."/>
            <person name="Vacherie B."/>
            <person name="Vallenet D."/>
            <person name="Medigue C."/>
            <person name="Rocha E.P.C."/>
            <person name="Denamur E."/>
        </authorList>
    </citation>
    <scope>NUCLEOTIDE SEQUENCE [LARGE SCALE GENOMIC DNA]</scope>
    <source>
        <strain>ATCC 35469 / DSM 13698 / BCRC 15582 / CCUG 18766 / IAM 14443 / JCM 21226 / LMG 7866 / NBRC 102419 / NCTC 12128 / CDC 0568-73</strain>
    </source>
</reference>
<dbReference type="EC" id="3.6.4.-" evidence="1"/>
<dbReference type="EMBL" id="CU928158">
    <property type="protein sequence ID" value="CAQ87654.1"/>
    <property type="molecule type" value="Genomic_DNA"/>
</dbReference>
<dbReference type="RefSeq" id="WP_001117032.1">
    <property type="nucleotide sequence ID" value="NC_011740.1"/>
</dbReference>
<dbReference type="SMR" id="B7LVT0"/>
<dbReference type="GeneID" id="75058844"/>
<dbReference type="KEGG" id="efe:EFER_0068"/>
<dbReference type="HOGENOM" id="CLU_011520_0_0_6"/>
<dbReference type="OrthoDB" id="9814088at2"/>
<dbReference type="Proteomes" id="UP000000745">
    <property type="component" value="Chromosome"/>
</dbReference>
<dbReference type="GO" id="GO:0005524">
    <property type="term" value="F:ATP binding"/>
    <property type="evidence" value="ECO:0007669"/>
    <property type="project" value="UniProtKB-UniRule"/>
</dbReference>
<dbReference type="GO" id="GO:0003677">
    <property type="term" value="F:DNA binding"/>
    <property type="evidence" value="ECO:0007669"/>
    <property type="project" value="UniProtKB-KW"/>
</dbReference>
<dbReference type="GO" id="GO:0004386">
    <property type="term" value="F:helicase activity"/>
    <property type="evidence" value="ECO:0007669"/>
    <property type="project" value="UniProtKB-UniRule"/>
</dbReference>
<dbReference type="GO" id="GO:0016817">
    <property type="term" value="F:hydrolase activity, acting on acid anhydrides"/>
    <property type="evidence" value="ECO:0007669"/>
    <property type="project" value="InterPro"/>
</dbReference>
<dbReference type="GO" id="GO:0006355">
    <property type="term" value="P:regulation of DNA-templated transcription"/>
    <property type="evidence" value="ECO:0007669"/>
    <property type="project" value="UniProtKB-UniRule"/>
</dbReference>
<dbReference type="CDD" id="cd18011">
    <property type="entry name" value="DEXDc_RapA"/>
    <property type="match status" value="1"/>
</dbReference>
<dbReference type="CDD" id="cd18793">
    <property type="entry name" value="SF2_C_SNF"/>
    <property type="match status" value="1"/>
</dbReference>
<dbReference type="FunFam" id="2.30.30.140:FF:000020">
    <property type="entry name" value="RNA polymerase-associated protein RapA"/>
    <property type="match status" value="1"/>
</dbReference>
<dbReference type="FunFam" id="2.30.30.930:FF:000001">
    <property type="entry name" value="RNA polymerase-associated protein RapA"/>
    <property type="match status" value="1"/>
</dbReference>
<dbReference type="FunFam" id="3.30.360.80:FF:000001">
    <property type="entry name" value="RNA polymerase-associated protein RapA"/>
    <property type="match status" value="1"/>
</dbReference>
<dbReference type="FunFam" id="3.40.50.10810:FF:000012">
    <property type="entry name" value="RNA polymerase-associated protein RapA"/>
    <property type="match status" value="1"/>
</dbReference>
<dbReference type="FunFam" id="3.40.50.300:FF:000350">
    <property type="entry name" value="RNA polymerase-associated protein RapA"/>
    <property type="match status" value="1"/>
</dbReference>
<dbReference type="Gene3D" id="2.30.30.140">
    <property type="match status" value="1"/>
</dbReference>
<dbReference type="Gene3D" id="2.30.30.930">
    <property type="match status" value="1"/>
</dbReference>
<dbReference type="Gene3D" id="3.30.360.80">
    <property type="match status" value="1"/>
</dbReference>
<dbReference type="Gene3D" id="6.10.140.1500">
    <property type="match status" value="1"/>
</dbReference>
<dbReference type="Gene3D" id="6.10.140.2230">
    <property type="match status" value="1"/>
</dbReference>
<dbReference type="Gene3D" id="3.40.50.300">
    <property type="entry name" value="P-loop containing nucleotide triphosphate hydrolases"/>
    <property type="match status" value="1"/>
</dbReference>
<dbReference type="Gene3D" id="3.40.50.10810">
    <property type="entry name" value="Tandem AAA-ATPase domain"/>
    <property type="match status" value="1"/>
</dbReference>
<dbReference type="HAMAP" id="MF_01821">
    <property type="entry name" value="Helicase_RapA"/>
    <property type="match status" value="1"/>
</dbReference>
<dbReference type="InterPro" id="IPR014001">
    <property type="entry name" value="Helicase_ATP-bd"/>
</dbReference>
<dbReference type="InterPro" id="IPR001650">
    <property type="entry name" value="Helicase_C-like"/>
</dbReference>
<dbReference type="InterPro" id="IPR023949">
    <property type="entry name" value="Helicase_RapA"/>
</dbReference>
<dbReference type="InterPro" id="IPR027417">
    <property type="entry name" value="P-loop_NTPase"/>
</dbReference>
<dbReference type="InterPro" id="IPR022737">
    <property type="entry name" value="RapA_C"/>
</dbReference>
<dbReference type="InterPro" id="IPR038718">
    <property type="entry name" value="SNF2-like_sf"/>
</dbReference>
<dbReference type="InterPro" id="IPR049730">
    <property type="entry name" value="SNF2/RAD54-like_C"/>
</dbReference>
<dbReference type="InterPro" id="IPR000330">
    <property type="entry name" value="SNF2_N"/>
</dbReference>
<dbReference type="InterPro" id="IPR040765">
    <property type="entry name" value="Tudor_1_RapA"/>
</dbReference>
<dbReference type="InterPro" id="IPR040766">
    <property type="entry name" value="Tudor_2_RapA"/>
</dbReference>
<dbReference type="NCBIfam" id="NF003426">
    <property type="entry name" value="PRK04914.1"/>
    <property type="match status" value="1"/>
</dbReference>
<dbReference type="PANTHER" id="PTHR45766">
    <property type="entry name" value="DNA ANNEALING HELICASE AND ENDONUCLEASE ZRANB3 FAMILY MEMBER"/>
    <property type="match status" value="1"/>
</dbReference>
<dbReference type="PANTHER" id="PTHR45766:SF6">
    <property type="entry name" value="SWI_SNF-RELATED MATRIX-ASSOCIATED ACTIN-DEPENDENT REGULATOR OF CHROMATIN SUBFAMILY A-LIKE PROTEIN 1"/>
    <property type="match status" value="1"/>
</dbReference>
<dbReference type="Pfam" id="PF00271">
    <property type="entry name" value="Helicase_C"/>
    <property type="match status" value="1"/>
</dbReference>
<dbReference type="Pfam" id="PF12137">
    <property type="entry name" value="RapA_C"/>
    <property type="match status" value="1"/>
</dbReference>
<dbReference type="Pfam" id="PF00176">
    <property type="entry name" value="SNF2-rel_dom"/>
    <property type="match status" value="1"/>
</dbReference>
<dbReference type="Pfam" id="PF18339">
    <property type="entry name" value="Tudor_1_RapA"/>
    <property type="match status" value="1"/>
</dbReference>
<dbReference type="Pfam" id="PF18337">
    <property type="entry name" value="Tudor_RapA"/>
    <property type="match status" value="1"/>
</dbReference>
<dbReference type="SMART" id="SM00487">
    <property type="entry name" value="DEXDc"/>
    <property type="match status" value="1"/>
</dbReference>
<dbReference type="SMART" id="SM00490">
    <property type="entry name" value="HELICc"/>
    <property type="match status" value="1"/>
</dbReference>
<dbReference type="SUPFAM" id="SSF52540">
    <property type="entry name" value="P-loop containing nucleoside triphosphate hydrolases"/>
    <property type="match status" value="2"/>
</dbReference>
<dbReference type="PROSITE" id="PS51192">
    <property type="entry name" value="HELICASE_ATP_BIND_1"/>
    <property type="match status" value="1"/>
</dbReference>
<dbReference type="PROSITE" id="PS51194">
    <property type="entry name" value="HELICASE_CTER"/>
    <property type="match status" value="1"/>
</dbReference>
<proteinExistence type="inferred from homology"/>
<evidence type="ECO:0000255" key="1">
    <source>
        <dbReference type="HAMAP-Rule" id="MF_01821"/>
    </source>
</evidence>
<gene>
    <name evidence="1" type="primary">rapA</name>
    <name type="ordered locus">EFER_0068</name>
</gene>